<evidence type="ECO:0000255" key="1">
    <source>
        <dbReference type="HAMAP-Rule" id="MF_00580"/>
    </source>
</evidence>
<dbReference type="EMBL" id="CP001043">
    <property type="protein sequence ID" value="ACC71509.1"/>
    <property type="molecule type" value="Genomic_DNA"/>
</dbReference>
<dbReference type="RefSeq" id="WP_012401714.1">
    <property type="nucleotide sequence ID" value="NZ_CADFGH010000002.1"/>
</dbReference>
<dbReference type="SMR" id="B2JFE1"/>
<dbReference type="STRING" id="391038.Bphy_2334"/>
<dbReference type="KEGG" id="bph:Bphy_2334"/>
<dbReference type="eggNOG" id="COG0234">
    <property type="taxonomic scope" value="Bacteria"/>
</dbReference>
<dbReference type="HOGENOM" id="CLU_132825_1_0_4"/>
<dbReference type="OrthoDB" id="9806791at2"/>
<dbReference type="Proteomes" id="UP000001192">
    <property type="component" value="Chromosome 1"/>
</dbReference>
<dbReference type="GO" id="GO:0005737">
    <property type="term" value="C:cytoplasm"/>
    <property type="evidence" value="ECO:0007669"/>
    <property type="project" value="UniProtKB-SubCell"/>
</dbReference>
<dbReference type="GO" id="GO:0005524">
    <property type="term" value="F:ATP binding"/>
    <property type="evidence" value="ECO:0007669"/>
    <property type="project" value="InterPro"/>
</dbReference>
<dbReference type="GO" id="GO:0046872">
    <property type="term" value="F:metal ion binding"/>
    <property type="evidence" value="ECO:0007669"/>
    <property type="project" value="TreeGrafter"/>
</dbReference>
<dbReference type="GO" id="GO:0044183">
    <property type="term" value="F:protein folding chaperone"/>
    <property type="evidence" value="ECO:0007669"/>
    <property type="project" value="InterPro"/>
</dbReference>
<dbReference type="GO" id="GO:0051087">
    <property type="term" value="F:protein-folding chaperone binding"/>
    <property type="evidence" value="ECO:0007669"/>
    <property type="project" value="TreeGrafter"/>
</dbReference>
<dbReference type="GO" id="GO:0051082">
    <property type="term" value="F:unfolded protein binding"/>
    <property type="evidence" value="ECO:0007669"/>
    <property type="project" value="TreeGrafter"/>
</dbReference>
<dbReference type="GO" id="GO:0051085">
    <property type="term" value="P:chaperone cofactor-dependent protein refolding"/>
    <property type="evidence" value="ECO:0007669"/>
    <property type="project" value="TreeGrafter"/>
</dbReference>
<dbReference type="CDD" id="cd00320">
    <property type="entry name" value="cpn10"/>
    <property type="match status" value="1"/>
</dbReference>
<dbReference type="FunFam" id="2.30.33.40:FF:000001">
    <property type="entry name" value="10 kDa chaperonin"/>
    <property type="match status" value="1"/>
</dbReference>
<dbReference type="Gene3D" id="2.30.33.40">
    <property type="entry name" value="GroES chaperonin"/>
    <property type="match status" value="1"/>
</dbReference>
<dbReference type="HAMAP" id="MF_00580">
    <property type="entry name" value="CH10"/>
    <property type="match status" value="1"/>
</dbReference>
<dbReference type="InterPro" id="IPR020818">
    <property type="entry name" value="Chaperonin_GroES"/>
</dbReference>
<dbReference type="InterPro" id="IPR037124">
    <property type="entry name" value="Chaperonin_GroES_sf"/>
</dbReference>
<dbReference type="InterPro" id="IPR018369">
    <property type="entry name" value="Chaprnonin_Cpn10_CS"/>
</dbReference>
<dbReference type="InterPro" id="IPR011032">
    <property type="entry name" value="GroES-like_sf"/>
</dbReference>
<dbReference type="NCBIfam" id="NF001527">
    <property type="entry name" value="PRK00364.1-2"/>
    <property type="match status" value="1"/>
</dbReference>
<dbReference type="NCBIfam" id="NF001529">
    <property type="entry name" value="PRK00364.1-5"/>
    <property type="match status" value="1"/>
</dbReference>
<dbReference type="NCBIfam" id="NF001531">
    <property type="entry name" value="PRK00364.2-2"/>
    <property type="match status" value="1"/>
</dbReference>
<dbReference type="NCBIfam" id="NF001533">
    <property type="entry name" value="PRK00364.2-4"/>
    <property type="match status" value="1"/>
</dbReference>
<dbReference type="NCBIfam" id="NF001534">
    <property type="entry name" value="PRK00364.2-5"/>
    <property type="match status" value="1"/>
</dbReference>
<dbReference type="PANTHER" id="PTHR10772">
    <property type="entry name" value="10 KDA HEAT SHOCK PROTEIN"/>
    <property type="match status" value="1"/>
</dbReference>
<dbReference type="PANTHER" id="PTHR10772:SF58">
    <property type="entry name" value="CO-CHAPERONIN GROES"/>
    <property type="match status" value="1"/>
</dbReference>
<dbReference type="Pfam" id="PF00166">
    <property type="entry name" value="Cpn10"/>
    <property type="match status" value="1"/>
</dbReference>
<dbReference type="PRINTS" id="PR00297">
    <property type="entry name" value="CHAPERONIN10"/>
</dbReference>
<dbReference type="SMART" id="SM00883">
    <property type="entry name" value="Cpn10"/>
    <property type="match status" value="1"/>
</dbReference>
<dbReference type="SUPFAM" id="SSF50129">
    <property type="entry name" value="GroES-like"/>
    <property type="match status" value="1"/>
</dbReference>
<dbReference type="PROSITE" id="PS00681">
    <property type="entry name" value="CHAPERONINS_CPN10"/>
    <property type="match status" value="1"/>
</dbReference>
<comment type="function">
    <text evidence="1">Together with the chaperonin GroEL, plays an essential role in assisting protein folding. The GroEL-GroES system forms a nano-cage that allows encapsulation of the non-native substrate proteins and provides a physical environment optimized to promote and accelerate protein folding. GroES binds to the apical surface of the GroEL ring, thereby capping the opening of the GroEL channel.</text>
</comment>
<comment type="subunit">
    <text evidence="1">Heptamer of 7 subunits arranged in a ring. Interacts with the chaperonin GroEL.</text>
</comment>
<comment type="subcellular location">
    <subcellularLocation>
        <location evidence="1">Cytoplasm</location>
    </subcellularLocation>
</comment>
<comment type="similarity">
    <text evidence="1">Belongs to the GroES chaperonin family.</text>
</comment>
<keyword id="KW-0143">Chaperone</keyword>
<keyword id="KW-0963">Cytoplasm</keyword>
<keyword id="KW-1185">Reference proteome</keyword>
<gene>
    <name evidence="1" type="primary">groES</name>
    <name evidence="1" type="synonym">groS</name>
    <name type="ordered locus">Bphy_2334</name>
</gene>
<feature type="chain" id="PRO_1000129632" description="Co-chaperonin GroES">
    <location>
        <begin position="1"/>
        <end position="96"/>
    </location>
</feature>
<proteinExistence type="inferred from homology"/>
<name>CH10_PARP8</name>
<organism>
    <name type="scientific">Paraburkholderia phymatum (strain DSM 17167 / CIP 108236 / LMG 21445 / STM815)</name>
    <name type="common">Burkholderia phymatum</name>
    <dbReference type="NCBI Taxonomy" id="391038"/>
    <lineage>
        <taxon>Bacteria</taxon>
        <taxon>Pseudomonadati</taxon>
        <taxon>Pseudomonadota</taxon>
        <taxon>Betaproteobacteria</taxon>
        <taxon>Burkholderiales</taxon>
        <taxon>Burkholderiaceae</taxon>
        <taxon>Paraburkholderia</taxon>
    </lineage>
</organism>
<accession>B2JFE1</accession>
<sequence>MNLRPLHDRVIVKRLDQETKTASGIVIPDAAAEKPDQGEVLAVGPGKRDDKGAPIALDVKVGDRVLFGKYAGQTVKVDGNELLVMREEDIMAVVNK</sequence>
<reference key="1">
    <citation type="journal article" date="2014" name="Stand. Genomic Sci.">
        <title>Complete genome sequence of Burkholderia phymatum STM815(T), a broad host range and efficient nitrogen-fixing symbiont of Mimosa species.</title>
        <authorList>
            <person name="Moulin L."/>
            <person name="Klonowska A."/>
            <person name="Caroline B."/>
            <person name="Booth K."/>
            <person name="Vriezen J.A."/>
            <person name="Melkonian R."/>
            <person name="James E.K."/>
            <person name="Young J.P."/>
            <person name="Bena G."/>
            <person name="Hauser L."/>
            <person name="Land M."/>
            <person name="Kyrpides N."/>
            <person name="Bruce D."/>
            <person name="Chain P."/>
            <person name="Copeland A."/>
            <person name="Pitluck S."/>
            <person name="Woyke T."/>
            <person name="Lizotte-Waniewski M."/>
            <person name="Bristow J."/>
            <person name="Riley M."/>
        </authorList>
    </citation>
    <scope>NUCLEOTIDE SEQUENCE [LARGE SCALE GENOMIC DNA]</scope>
    <source>
        <strain>DSM 17167 / CIP 108236 / LMG 21445 / STM815</strain>
    </source>
</reference>
<protein>
    <recommendedName>
        <fullName evidence="1">Co-chaperonin GroES</fullName>
    </recommendedName>
    <alternativeName>
        <fullName evidence="1">10 kDa chaperonin</fullName>
    </alternativeName>
    <alternativeName>
        <fullName evidence="1">Chaperonin-10</fullName>
        <shortName evidence="1">Cpn10</shortName>
    </alternativeName>
</protein>